<gene>
    <name type="primary">yfhC</name>
    <name type="ordered locus">BSU08480</name>
</gene>
<protein>
    <recommendedName>
        <fullName>Putative NAD(P)H nitroreductase YfhC</fullName>
        <ecNumber>1.-.-.-</ecNumber>
    </recommendedName>
</protein>
<evidence type="ECO:0000250" key="1"/>
<evidence type="ECO:0000305" key="2"/>
<sequence>MPQTEQIHQHSVLRDIIRSRRSIRKFKQEPVPSAVILDMLETAKYAPNHRVTEPWRFIYVSSETGKANLINTFAAFSKKSKPDMTEEKLQNFKNTLGRVPGFLLVVFQEDENERARDDDFAATSSLIQNLQLLAWEKGIGMVWKSGKILYDKEVHQAFGLQDNERFAAIIQTGYPDEAPEVKKRTPIRDRFTEM</sequence>
<organism>
    <name type="scientific">Bacillus subtilis (strain 168)</name>
    <dbReference type="NCBI Taxonomy" id="224308"/>
    <lineage>
        <taxon>Bacteria</taxon>
        <taxon>Bacillati</taxon>
        <taxon>Bacillota</taxon>
        <taxon>Bacilli</taxon>
        <taxon>Bacillales</taxon>
        <taxon>Bacillaceae</taxon>
        <taxon>Bacillus</taxon>
    </lineage>
</organism>
<keyword id="KW-0285">Flavoprotein</keyword>
<keyword id="KW-0288">FMN</keyword>
<keyword id="KW-0520">NAD</keyword>
<keyword id="KW-0521">NADP</keyword>
<keyword id="KW-0560">Oxidoreductase</keyword>
<keyword id="KW-1185">Reference proteome</keyword>
<name>YFHC_BACSU</name>
<reference key="1">
    <citation type="journal article" date="1996" name="DNA Res.">
        <title>Cloning and sequencing of a 27.8-kb nucleotide sequence of the 79 degrees-81 degrees region of the Bacillus subtilis genome containing the sspE locus.</title>
        <authorList>
            <person name="Yamamoto H."/>
            <person name="Uchiyama S."/>
            <person name="Sekiguchi J."/>
        </authorList>
    </citation>
    <scope>NUCLEOTIDE SEQUENCE [GENOMIC DNA]</scope>
</reference>
<reference key="2">
    <citation type="journal article" date="1997" name="Nature">
        <title>The complete genome sequence of the Gram-positive bacterium Bacillus subtilis.</title>
        <authorList>
            <person name="Kunst F."/>
            <person name="Ogasawara N."/>
            <person name="Moszer I."/>
            <person name="Albertini A.M."/>
            <person name="Alloni G."/>
            <person name="Azevedo V."/>
            <person name="Bertero M.G."/>
            <person name="Bessieres P."/>
            <person name="Bolotin A."/>
            <person name="Borchert S."/>
            <person name="Borriss R."/>
            <person name="Boursier L."/>
            <person name="Brans A."/>
            <person name="Braun M."/>
            <person name="Brignell S.C."/>
            <person name="Bron S."/>
            <person name="Brouillet S."/>
            <person name="Bruschi C.V."/>
            <person name="Caldwell B."/>
            <person name="Capuano V."/>
            <person name="Carter N.M."/>
            <person name="Choi S.-K."/>
            <person name="Codani J.-J."/>
            <person name="Connerton I.F."/>
            <person name="Cummings N.J."/>
            <person name="Daniel R.A."/>
            <person name="Denizot F."/>
            <person name="Devine K.M."/>
            <person name="Duesterhoeft A."/>
            <person name="Ehrlich S.D."/>
            <person name="Emmerson P.T."/>
            <person name="Entian K.-D."/>
            <person name="Errington J."/>
            <person name="Fabret C."/>
            <person name="Ferrari E."/>
            <person name="Foulger D."/>
            <person name="Fritz C."/>
            <person name="Fujita M."/>
            <person name="Fujita Y."/>
            <person name="Fuma S."/>
            <person name="Galizzi A."/>
            <person name="Galleron N."/>
            <person name="Ghim S.-Y."/>
            <person name="Glaser P."/>
            <person name="Goffeau A."/>
            <person name="Golightly E.J."/>
            <person name="Grandi G."/>
            <person name="Guiseppi G."/>
            <person name="Guy B.J."/>
            <person name="Haga K."/>
            <person name="Haiech J."/>
            <person name="Harwood C.R."/>
            <person name="Henaut A."/>
            <person name="Hilbert H."/>
            <person name="Holsappel S."/>
            <person name="Hosono S."/>
            <person name="Hullo M.-F."/>
            <person name="Itaya M."/>
            <person name="Jones L.-M."/>
            <person name="Joris B."/>
            <person name="Karamata D."/>
            <person name="Kasahara Y."/>
            <person name="Klaerr-Blanchard M."/>
            <person name="Klein C."/>
            <person name="Kobayashi Y."/>
            <person name="Koetter P."/>
            <person name="Koningstein G."/>
            <person name="Krogh S."/>
            <person name="Kumano M."/>
            <person name="Kurita K."/>
            <person name="Lapidus A."/>
            <person name="Lardinois S."/>
            <person name="Lauber J."/>
            <person name="Lazarevic V."/>
            <person name="Lee S.-M."/>
            <person name="Levine A."/>
            <person name="Liu H."/>
            <person name="Masuda S."/>
            <person name="Mauel C."/>
            <person name="Medigue C."/>
            <person name="Medina N."/>
            <person name="Mellado R.P."/>
            <person name="Mizuno M."/>
            <person name="Moestl D."/>
            <person name="Nakai S."/>
            <person name="Noback M."/>
            <person name="Noone D."/>
            <person name="O'Reilly M."/>
            <person name="Ogawa K."/>
            <person name="Ogiwara A."/>
            <person name="Oudega B."/>
            <person name="Park S.-H."/>
            <person name="Parro V."/>
            <person name="Pohl T.M."/>
            <person name="Portetelle D."/>
            <person name="Porwollik S."/>
            <person name="Prescott A.M."/>
            <person name="Presecan E."/>
            <person name="Pujic P."/>
            <person name="Purnelle B."/>
            <person name="Rapoport G."/>
            <person name="Rey M."/>
            <person name="Reynolds S."/>
            <person name="Rieger M."/>
            <person name="Rivolta C."/>
            <person name="Rocha E."/>
            <person name="Roche B."/>
            <person name="Rose M."/>
            <person name="Sadaie Y."/>
            <person name="Sato T."/>
            <person name="Scanlan E."/>
            <person name="Schleich S."/>
            <person name="Schroeter R."/>
            <person name="Scoffone F."/>
            <person name="Sekiguchi J."/>
            <person name="Sekowska A."/>
            <person name="Seror S.J."/>
            <person name="Serror P."/>
            <person name="Shin B.-S."/>
            <person name="Soldo B."/>
            <person name="Sorokin A."/>
            <person name="Tacconi E."/>
            <person name="Takagi T."/>
            <person name="Takahashi H."/>
            <person name="Takemaru K."/>
            <person name="Takeuchi M."/>
            <person name="Tamakoshi A."/>
            <person name="Tanaka T."/>
            <person name="Terpstra P."/>
            <person name="Tognoni A."/>
            <person name="Tosato V."/>
            <person name="Uchiyama S."/>
            <person name="Vandenbol M."/>
            <person name="Vannier F."/>
            <person name="Vassarotti A."/>
            <person name="Viari A."/>
            <person name="Wambutt R."/>
            <person name="Wedler E."/>
            <person name="Wedler H."/>
            <person name="Weitzenegger T."/>
            <person name="Winters P."/>
            <person name="Wipat A."/>
            <person name="Yamamoto H."/>
            <person name="Yamane K."/>
            <person name="Yasumoto K."/>
            <person name="Yata K."/>
            <person name="Yoshida K."/>
            <person name="Yoshikawa H.-F."/>
            <person name="Zumstein E."/>
            <person name="Yoshikawa H."/>
            <person name="Danchin A."/>
        </authorList>
    </citation>
    <scope>NUCLEOTIDE SEQUENCE [LARGE SCALE GENOMIC DNA]</scope>
    <source>
        <strain>168</strain>
    </source>
</reference>
<feature type="chain" id="PRO_0000382693" description="Putative NAD(P)H nitroreductase YfhC">
    <location>
        <begin position="1"/>
        <end position="194"/>
    </location>
</feature>
<feature type="binding site" evidence="1">
    <location>
        <begin position="20"/>
        <end position="22"/>
    </location>
    <ligand>
        <name>FMN</name>
        <dbReference type="ChEBI" id="CHEBI:58210"/>
    </ligand>
</feature>
<feature type="binding site" evidence="1">
    <location>
        <begin position="147"/>
        <end position="148"/>
    </location>
    <ligand>
        <name>FMN</name>
        <dbReference type="ChEBI" id="CHEBI:58210"/>
    </ligand>
</feature>
<feature type="binding site" evidence="1">
    <location>
        <position position="188"/>
    </location>
    <ligand>
        <name>FMN</name>
        <dbReference type="ChEBI" id="CHEBI:58210"/>
    </ligand>
</feature>
<accession>O31571</accession>
<accession>Q79EW0</accession>
<dbReference type="EC" id="1.-.-.-"/>
<dbReference type="EMBL" id="D85082">
    <property type="protein sequence ID" value="BAA24469.1"/>
    <property type="molecule type" value="Genomic_DNA"/>
</dbReference>
<dbReference type="EMBL" id="AL009126">
    <property type="protein sequence ID" value="CAB12677.1"/>
    <property type="molecule type" value="Genomic_DNA"/>
</dbReference>
<dbReference type="PIR" id="D69800">
    <property type="entry name" value="D69800"/>
</dbReference>
<dbReference type="RefSeq" id="NP_388729.1">
    <property type="nucleotide sequence ID" value="NC_000964.3"/>
</dbReference>
<dbReference type="RefSeq" id="WP_003243940.1">
    <property type="nucleotide sequence ID" value="NZ_OZ025638.1"/>
</dbReference>
<dbReference type="SMR" id="O31571"/>
<dbReference type="FunCoup" id="O31571">
    <property type="interactions" value="74"/>
</dbReference>
<dbReference type="STRING" id="224308.BSU08480"/>
<dbReference type="jPOST" id="O31571"/>
<dbReference type="PaxDb" id="224308-BSU08480"/>
<dbReference type="EnsemblBacteria" id="CAB12677">
    <property type="protein sequence ID" value="CAB12677"/>
    <property type="gene ID" value="BSU_08480"/>
</dbReference>
<dbReference type="GeneID" id="939221"/>
<dbReference type="KEGG" id="bsu:BSU08480"/>
<dbReference type="PATRIC" id="fig|224308.179.peg.915"/>
<dbReference type="eggNOG" id="COG0778">
    <property type="taxonomic scope" value="Bacteria"/>
</dbReference>
<dbReference type="InParanoid" id="O31571"/>
<dbReference type="OrthoDB" id="9804207at2"/>
<dbReference type="PhylomeDB" id="O31571"/>
<dbReference type="BioCyc" id="BSUB:BSU08480-MONOMER"/>
<dbReference type="Proteomes" id="UP000001570">
    <property type="component" value="Chromosome"/>
</dbReference>
<dbReference type="GO" id="GO:0016491">
    <property type="term" value="F:oxidoreductase activity"/>
    <property type="evidence" value="ECO:0007669"/>
    <property type="project" value="UniProtKB-KW"/>
</dbReference>
<dbReference type="CDD" id="cd02135">
    <property type="entry name" value="YdjA-like"/>
    <property type="match status" value="1"/>
</dbReference>
<dbReference type="Gene3D" id="3.40.109.10">
    <property type="entry name" value="NADH Oxidase"/>
    <property type="match status" value="1"/>
</dbReference>
<dbReference type="InterPro" id="IPR052530">
    <property type="entry name" value="NAD(P)H_nitroreductase"/>
</dbReference>
<dbReference type="InterPro" id="IPR029479">
    <property type="entry name" value="Nitroreductase"/>
</dbReference>
<dbReference type="InterPro" id="IPR000415">
    <property type="entry name" value="Nitroreductase-like"/>
</dbReference>
<dbReference type="InterPro" id="IPR026021">
    <property type="entry name" value="YdjA-like"/>
</dbReference>
<dbReference type="PANTHER" id="PTHR43821">
    <property type="entry name" value="NAD(P)H NITROREDUCTASE YDJA-RELATED"/>
    <property type="match status" value="1"/>
</dbReference>
<dbReference type="PANTHER" id="PTHR43821:SF1">
    <property type="entry name" value="NAD(P)H NITROREDUCTASE YDJA-RELATED"/>
    <property type="match status" value="1"/>
</dbReference>
<dbReference type="Pfam" id="PF00881">
    <property type="entry name" value="Nitroreductase"/>
    <property type="match status" value="1"/>
</dbReference>
<dbReference type="PIRSF" id="PIRSF000232">
    <property type="entry name" value="YdjA"/>
    <property type="match status" value="1"/>
</dbReference>
<dbReference type="SUPFAM" id="SSF55469">
    <property type="entry name" value="FMN-dependent nitroreductase-like"/>
    <property type="match status" value="1"/>
</dbReference>
<comment type="cofactor">
    <cofactor evidence="1">
        <name>FMN</name>
        <dbReference type="ChEBI" id="CHEBI:58210"/>
    </cofactor>
</comment>
<comment type="similarity">
    <text evidence="2">Belongs to the nitroreductase family.</text>
</comment>
<proteinExistence type="inferred from homology"/>